<name>RUVA_PSEP7</name>
<gene>
    <name evidence="1" type="primary">ruvA</name>
    <name type="ordered locus">PSPA7_4542</name>
</gene>
<accession>A6VA06</accession>
<protein>
    <recommendedName>
        <fullName evidence="1">Holliday junction branch migration complex subunit RuvA</fullName>
    </recommendedName>
</protein>
<sequence length="201" mass="21960">MIGRLRGTLAEKQPPHLILDVNGVGYEVEVPMTTLYRLPSVGEPVTLHTHLVVREDAHLLYGFAEKRERELFRELIRLNGVGPKLALALMSGLEVDELVRCVQAQDTSTLVKIPGVGKKTAERLLVELKDRFKAWENMPTIAPLVMEPRASATVSSAEADAVSALIALGFKPQEASRAVAAVPGEDLSSEEMIRQALKGMV</sequence>
<organism>
    <name type="scientific">Pseudomonas paraeruginosa (strain DSM 24068 / PA7)</name>
    <name type="common">Pseudomonas aeruginosa (strain PA7)</name>
    <dbReference type="NCBI Taxonomy" id="381754"/>
    <lineage>
        <taxon>Bacteria</taxon>
        <taxon>Pseudomonadati</taxon>
        <taxon>Pseudomonadota</taxon>
        <taxon>Gammaproteobacteria</taxon>
        <taxon>Pseudomonadales</taxon>
        <taxon>Pseudomonadaceae</taxon>
        <taxon>Pseudomonas</taxon>
        <taxon>Pseudomonas paraeruginosa</taxon>
    </lineage>
</organism>
<proteinExistence type="inferred from homology"/>
<keyword id="KW-0963">Cytoplasm</keyword>
<keyword id="KW-0227">DNA damage</keyword>
<keyword id="KW-0233">DNA recombination</keyword>
<keyword id="KW-0234">DNA repair</keyword>
<keyword id="KW-0238">DNA-binding</keyword>
<dbReference type="EMBL" id="CP000744">
    <property type="protein sequence ID" value="ABR82289.1"/>
    <property type="molecule type" value="Genomic_DNA"/>
</dbReference>
<dbReference type="RefSeq" id="WP_003086122.1">
    <property type="nucleotide sequence ID" value="NC_009656.1"/>
</dbReference>
<dbReference type="SMR" id="A6VA06"/>
<dbReference type="GeneID" id="77222451"/>
<dbReference type="KEGG" id="pap:PSPA7_4542"/>
<dbReference type="HOGENOM" id="CLU_087936_0_0_6"/>
<dbReference type="Proteomes" id="UP000001582">
    <property type="component" value="Chromosome"/>
</dbReference>
<dbReference type="GO" id="GO:0005737">
    <property type="term" value="C:cytoplasm"/>
    <property type="evidence" value="ECO:0007669"/>
    <property type="project" value="UniProtKB-SubCell"/>
</dbReference>
<dbReference type="GO" id="GO:0009379">
    <property type="term" value="C:Holliday junction helicase complex"/>
    <property type="evidence" value="ECO:0007669"/>
    <property type="project" value="InterPro"/>
</dbReference>
<dbReference type="GO" id="GO:0048476">
    <property type="term" value="C:Holliday junction resolvase complex"/>
    <property type="evidence" value="ECO:0007669"/>
    <property type="project" value="UniProtKB-UniRule"/>
</dbReference>
<dbReference type="GO" id="GO:0005524">
    <property type="term" value="F:ATP binding"/>
    <property type="evidence" value="ECO:0007669"/>
    <property type="project" value="InterPro"/>
</dbReference>
<dbReference type="GO" id="GO:0000400">
    <property type="term" value="F:four-way junction DNA binding"/>
    <property type="evidence" value="ECO:0007669"/>
    <property type="project" value="UniProtKB-UniRule"/>
</dbReference>
<dbReference type="GO" id="GO:0009378">
    <property type="term" value="F:four-way junction helicase activity"/>
    <property type="evidence" value="ECO:0007669"/>
    <property type="project" value="InterPro"/>
</dbReference>
<dbReference type="GO" id="GO:0006310">
    <property type="term" value="P:DNA recombination"/>
    <property type="evidence" value="ECO:0007669"/>
    <property type="project" value="UniProtKB-UniRule"/>
</dbReference>
<dbReference type="GO" id="GO:0006281">
    <property type="term" value="P:DNA repair"/>
    <property type="evidence" value="ECO:0007669"/>
    <property type="project" value="UniProtKB-UniRule"/>
</dbReference>
<dbReference type="CDD" id="cd14332">
    <property type="entry name" value="UBA_RuvA_C"/>
    <property type="match status" value="1"/>
</dbReference>
<dbReference type="Gene3D" id="1.10.150.20">
    <property type="entry name" value="5' to 3' exonuclease, C-terminal subdomain"/>
    <property type="match status" value="1"/>
</dbReference>
<dbReference type="Gene3D" id="1.10.8.10">
    <property type="entry name" value="DNA helicase RuvA subunit, C-terminal domain"/>
    <property type="match status" value="1"/>
</dbReference>
<dbReference type="Gene3D" id="2.40.50.140">
    <property type="entry name" value="Nucleic acid-binding proteins"/>
    <property type="match status" value="1"/>
</dbReference>
<dbReference type="HAMAP" id="MF_00031">
    <property type="entry name" value="DNA_HJ_migration_RuvA"/>
    <property type="match status" value="1"/>
</dbReference>
<dbReference type="InterPro" id="IPR013849">
    <property type="entry name" value="DNA_helicase_Holl-junc_RuvA_I"/>
</dbReference>
<dbReference type="InterPro" id="IPR003583">
    <property type="entry name" value="Hlx-hairpin-Hlx_DNA-bd_motif"/>
</dbReference>
<dbReference type="InterPro" id="IPR012340">
    <property type="entry name" value="NA-bd_OB-fold"/>
</dbReference>
<dbReference type="InterPro" id="IPR000085">
    <property type="entry name" value="RuvA"/>
</dbReference>
<dbReference type="InterPro" id="IPR010994">
    <property type="entry name" value="RuvA_2-like"/>
</dbReference>
<dbReference type="InterPro" id="IPR011114">
    <property type="entry name" value="RuvA_C"/>
</dbReference>
<dbReference type="InterPro" id="IPR036267">
    <property type="entry name" value="RuvA_C_sf"/>
</dbReference>
<dbReference type="NCBIfam" id="TIGR00084">
    <property type="entry name" value="ruvA"/>
    <property type="match status" value="1"/>
</dbReference>
<dbReference type="Pfam" id="PF14520">
    <property type="entry name" value="HHH_5"/>
    <property type="match status" value="1"/>
</dbReference>
<dbReference type="Pfam" id="PF07499">
    <property type="entry name" value="RuvA_C"/>
    <property type="match status" value="1"/>
</dbReference>
<dbReference type="Pfam" id="PF01330">
    <property type="entry name" value="RuvA_N"/>
    <property type="match status" value="1"/>
</dbReference>
<dbReference type="SMART" id="SM00278">
    <property type="entry name" value="HhH1"/>
    <property type="match status" value="2"/>
</dbReference>
<dbReference type="SUPFAM" id="SSF46929">
    <property type="entry name" value="DNA helicase RuvA subunit, C-terminal domain"/>
    <property type="match status" value="1"/>
</dbReference>
<dbReference type="SUPFAM" id="SSF50249">
    <property type="entry name" value="Nucleic acid-binding proteins"/>
    <property type="match status" value="1"/>
</dbReference>
<dbReference type="SUPFAM" id="SSF47781">
    <property type="entry name" value="RuvA domain 2-like"/>
    <property type="match status" value="1"/>
</dbReference>
<evidence type="ECO:0000255" key="1">
    <source>
        <dbReference type="HAMAP-Rule" id="MF_00031"/>
    </source>
</evidence>
<comment type="function">
    <text evidence="1">The RuvA-RuvB-RuvC complex processes Holliday junction (HJ) DNA during genetic recombination and DNA repair, while the RuvA-RuvB complex plays an important role in the rescue of blocked DNA replication forks via replication fork reversal (RFR). RuvA specifically binds to HJ cruciform DNA, conferring on it an open structure. The RuvB hexamer acts as an ATP-dependent pump, pulling dsDNA into and through the RuvAB complex. HJ branch migration allows RuvC to scan DNA until it finds its consensus sequence, where it cleaves and resolves the cruciform DNA.</text>
</comment>
<comment type="subunit">
    <text evidence="1">Homotetramer. Forms an RuvA(8)-RuvB(12)-Holliday junction (HJ) complex. HJ DNA is sandwiched between 2 RuvA tetramers; dsDNA enters through RuvA and exits via RuvB. An RuvB hexamer assembles on each DNA strand where it exits the tetramer. Each RuvB hexamer is contacted by two RuvA subunits (via domain III) on 2 adjacent RuvB subunits; this complex drives branch migration. In the full resolvosome a probable DNA-RuvA(4)-RuvB(12)-RuvC(2) complex forms which resolves the HJ.</text>
</comment>
<comment type="subcellular location">
    <subcellularLocation>
        <location evidence="1">Cytoplasm</location>
    </subcellularLocation>
</comment>
<comment type="domain">
    <text evidence="1">Has three domains with a flexible linker between the domains II and III and assumes an 'L' shape. Domain III is highly mobile and contacts RuvB.</text>
</comment>
<comment type="similarity">
    <text evidence="1">Belongs to the RuvA family.</text>
</comment>
<reference key="1">
    <citation type="submission" date="2007-06" db="EMBL/GenBank/DDBJ databases">
        <authorList>
            <person name="Dodson R.J."/>
            <person name="Harkins D."/>
            <person name="Paulsen I.T."/>
        </authorList>
    </citation>
    <scope>NUCLEOTIDE SEQUENCE [LARGE SCALE GENOMIC DNA]</scope>
    <source>
        <strain>DSM 24068 / PA7</strain>
    </source>
</reference>
<feature type="chain" id="PRO_1000002516" description="Holliday junction branch migration complex subunit RuvA">
    <location>
        <begin position="1"/>
        <end position="201"/>
    </location>
</feature>
<feature type="region of interest" description="Domain I" evidence="1">
    <location>
        <begin position="1"/>
        <end position="64"/>
    </location>
</feature>
<feature type="region of interest" description="Domain II" evidence="1">
    <location>
        <begin position="65"/>
        <end position="143"/>
    </location>
</feature>
<feature type="region of interest" description="Flexible linker" evidence="1">
    <location>
        <begin position="144"/>
        <end position="152"/>
    </location>
</feature>
<feature type="region of interest" description="Domain III" evidence="1">
    <location>
        <begin position="153"/>
        <end position="201"/>
    </location>
</feature>